<gene>
    <name evidence="1" type="primary">leuC</name>
    <name type="ordered locus">RPE_0332</name>
</gene>
<sequence>MSATKPTTLYDKIWNDHLAHEAEDGTCLLYIDRHLVHEVTSPQAFEGLRTAGRKVHAPEKTLAVVDHNVPTTDRSKPNPDPESAEQIAALAENAREFGVTYYNEFDKRQGVVHVIGPEQGFTLPGTTIVCGDSHTSTHGAFGALAHGIGTSEVEHVLATQTLIQKKAKNMRVTVDGDLPAGVTAKDIILAIIGEIGTAGGTGYVLEYAGSAIRALSMEGRMTVCNMSIEGGARAGLIAPDEKAYAYLKGRPLAPKGEAWDAAMRYWQTLRSDEGAHFDHEIRLDAAALPPIVTWGTSPEDVISITGKVPNPADIADEAKRLSKERALAYMGLNPGTKITDIKIDRMFIGSCTNGRIEDLRAAAKVAEGKTVNANVNAIIVPGSGLVKEQAEAEGLDKIFIAAGFEWREPGCSMCLAMNPDKLAPDERCASTSNRNFEGRQGFKGRTHLVSPAMAAAAAIAGHFVDIREWR</sequence>
<organism>
    <name type="scientific">Rhodopseudomonas palustris (strain BisA53)</name>
    <dbReference type="NCBI Taxonomy" id="316055"/>
    <lineage>
        <taxon>Bacteria</taxon>
        <taxon>Pseudomonadati</taxon>
        <taxon>Pseudomonadota</taxon>
        <taxon>Alphaproteobacteria</taxon>
        <taxon>Hyphomicrobiales</taxon>
        <taxon>Nitrobacteraceae</taxon>
        <taxon>Rhodopseudomonas</taxon>
    </lineage>
</organism>
<accession>Q07UU3</accession>
<protein>
    <recommendedName>
        <fullName evidence="1">3-isopropylmalate dehydratase large subunit</fullName>
        <ecNumber evidence="1">4.2.1.33</ecNumber>
    </recommendedName>
    <alternativeName>
        <fullName evidence="1">Alpha-IPM isomerase</fullName>
        <shortName evidence="1">IPMI</shortName>
    </alternativeName>
    <alternativeName>
        <fullName evidence="1">Isopropylmalate isomerase</fullName>
    </alternativeName>
</protein>
<evidence type="ECO:0000255" key="1">
    <source>
        <dbReference type="HAMAP-Rule" id="MF_01026"/>
    </source>
</evidence>
<proteinExistence type="inferred from homology"/>
<dbReference type="EC" id="4.2.1.33" evidence="1"/>
<dbReference type="EMBL" id="CP000463">
    <property type="protein sequence ID" value="ABJ04291.1"/>
    <property type="molecule type" value="Genomic_DNA"/>
</dbReference>
<dbReference type="SMR" id="Q07UU3"/>
<dbReference type="STRING" id="316055.RPE_0332"/>
<dbReference type="KEGG" id="rpe:RPE_0332"/>
<dbReference type="eggNOG" id="COG0065">
    <property type="taxonomic scope" value="Bacteria"/>
</dbReference>
<dbReference type="HOGENOM" id="CLU_006714_3_4_5"/>
<dbReference type="OrthoDB" id="9802769at2"/>
<dbReference type="UniPathway" id="UPA00048">
    <property type="reaction ID" value="UER00071"/>
</dbReference>
<dbReference type="GO" id="GO:0003861">
    <property type="term" value="F:3-isopropylmalate dehydratase activity"/>
    <property type="evidence" value="ECO:0007669"/>
    <property type="project" value="UniProtKB-UniRule"/>
</dbReference>
<dbReference type="GO" id="GO:0051539">
    <property type="term" value="F:4 iron, 4 sulfur cluster binding"/>
    <property type="evidence" value="ECO:0007669"/>
    <property type="project" value="UniProtKB-KW"/>
</dbReference>
<dbReference type="GO" id="GO:0046872">
    <property type="term" value="F:metal ion binding"/>
    <property type="evidence" value="ECO:0007669"/>
    <property type="project" value="UniProtKB-KW"/>
</dbReference>
<dbReference type="GO" id="GO:0009098">
    <property type="term" value="P:L-leucine biosynthetic process"/>
    <property type="evidence" value="ECO:0007669"/>
    <property type="project" value="UniProtKB-UniRule"/>
</dbReference>
<dbReference type="CDD" id="cd01583">
    <property type="entry name" value="IPMI"/>
    <property type="match status" value="1"/>
</dbReference>
<dbReference type="FunFam" id="3.30.499.10:FF:000007">
    <property type="entry name" value="3-isopropylmalate dehydratase large subunit"/>
    <property type="match status" value="1"/>
</dbReference>
<dbReference type="Gene3D" id="3.30.499.10">
    <property type="entry name" value="Aconitase, domain 3"/>
    <property type="match status" value="2"/>
</dbReference>
<dbReference type="HAMAP" id="MF_01026">
    <property type="entry name" value="LeuC_type1"/>
    <property type="match status" value="1"/>
</dbReference>
<dbReference type="InterPro" id="IPR004430">
    <property type="entry name" value="3-IsopropMal_deHydase_lsu"/>
</dbReference>
<dbReference type="InterPro" id="IPR015931">
    <property type="entry name" value="Acnase/IPM_dHydase_lsu_aba_1/3"/>
</dbReference>
<dbReference type="InterPro" id="IPR001030">
    <property type="entry name" value="Acoase/IPM_deHydtase_lsu_aba"/>
</dbReference>
<dbReference type="InterPro" id="IPR018136">
    <property type="entry name" value="Aconitase_4Fe-4S_BS"/>
</dbReference>
<dbReference type="InterPro" id="IPR036008">
    <property type="entry name" value="Aconitase_4Fe-4S_dom"/>
</dbReference>
<dbReference type="InterPro" id="IPR050067">
    <property type="entry name" value="IPM_dehydratase_rel_enz"/>
</dbReference>
<dbReference type="InterPro" id="IPR033941">
    <property type="entry name" value="IPMI_cat"/>
</dbReference>
<dbReference type="NCBIfam" id="TIGR00170">
    <property type="entry name" value="leuC"/>
    <property type="match status" value="1"/>
</dbReference>
<dbReference type="NCBIfam" id="NF004016">
    <property type="entry name" value="PRK05478.1"/>
    <property type="match status" value="1"/>
</dbReference>
<dbReference type="NCBIfam" id="NF009116">
    <property type="entry name" value="PRK12466.1"/>
    <property type="match status" value="1"/>
</dbReference>
<dbReference type="PANTHER" id="PTHR43822:SF9">
    <property type="entry name" value="3-ISOPROPYLMALATE DEHYDRATASE"/>
    <property type="match status" value="1"/>
</dbReference>
<dbReference type="PANTHER" id="PTHR43822">
    <property type="entry name" value="HOMOACONITASE, MITOCHONDRIAL-RELATED"/>
    <property type="match status" value="1"/>
</dbReference>
<dbReference type="Pfam" id="PF00330">
    <property type="entry name" value="Aconitase"/>
    <property type="match status" value="1"/>
</dbReference>
<dbReference type="PRINTS" id="PR00415">
    <property type="entry name" value="ACONITASE"/>
</dbReference>
<dbReference type="SUPFAM" id="SSF53732">
    <property type="entry name" value="Aconitase iron-sulfur domain"/>
    <property type="match status" value="1"/>
</dbReference>
<dbReference type="PROSITE" id="PS00450">
    <property type="entry name" value="ACONITASE_1"/>
    <property type="match status" value="1"/>
</dbReference>
<dbReference type="PROSITE" id="PS01244">
    <property type="entry name" value="ACONITASE_2"/>
    <property type="match status" value="1"/>
</dbReference>
<feature type="chain" id="PRO_0000319831" description="3-isopropylmalate dehydratase large subunit">
    <location>
        <begin position="1"/>
        <end position="470"/>
    </location>
</feature>
<feature type="binding site" evidence="1">
    <location>
        <position position="351"/>
    </location>
    <ligand>
        <name>[4Fe-4S] cluster</name>
        <dbReference type="ChEBI" id="CHEBI:49883"/>
    </ligand>
</feature>
<feature type="binding site" evidence="1">
    <location>
        <position position="411"/>
    </location>
    <ligand>
        <name>[4Fe-4S] cluster</name>
        <dbReference type="ChEBI" id="CHEBI:49883"/>
    </ligand>
</feature>
<feature type="binding site" evidence="1">
    <location>
        <position position="414"/>
    </location>
    <ligand>
        <name>[4Fe-4S] cluster</name>
        <dbReference type="ChEBI" id="CHEBI:49883"/>
    </ligand>
</feature>
<keyword id="KW-0004">4Fe-4S</keyword>
<keyword id="KW-0028">Amino-acid biosynthesis</keyword>
<keyword id="KW-0100">Branched-chain amino acid biosynthesis</keyword>
<keyword id="KW-0408">Iron</keyword>
<keyword id="KW-0411">Iron-sulfur</keyword>
<keyword id="KW-0432">Leucine biosynthesis</keyword>
<keyword id="KW-0456">Lyase</keyword>
<keyword id="KW-0479">Metal-binding</keyword>
<name>LEUC_RHOP5</name>
<reference key="1">
    <citation type="submission" date="2006-09" db="EMBL/GenBank/DDBJ databases">
        <title>Complete sequence of Rhodopseudomonas palustris BisA53.</title>
        <authorList>
            <consortium name="US DOE Joint Genome Institute"/>
            <person name="Copeland A."/>
            <person name="Lucas S."/>
            <person name="Lapidus A."/>
            <person name="Barry K."/>
            <person name="Detter J.C."/>
            <person name="Glavina del Rio T."/>
            <person name="Hammon N."/>
            <person name="Israni S."/>
            <person name="Dalin E."/>
            <person name="Tice H."/>
            <person name="Pitluck S."/>
            <person name="Chain P."/>
            <person name="Malfatti S."/>
            <person name="Shin M."/>
            <person name="Vergez L."/>
            <person name="Schmutz J."/>
            <person name="Larimer F."/>
            <person name="Land M."/>
            <person name="Hauser L."/>
            <person name="Pelletier D.A."/>
            <person name="Kyrpides N."/>
            <person name="Kim E."/>
            <person name="Harwood C.S."/>
            <person name="Oda Y."/>
            <person name="Richardson P."/>
        </authorList>
    </citation>
    <scope>NUCLEOTIDE SEQUENCE [LARGE SCALE GENOMIC DNA]</scope>
    <source>
        <strain>BisA53</strain>
    </source>
</reference>
<comment type="function">
    <text evidence="1">Catalyzes the isomerization between 2-isopropylmalate and 3-isopropylmalate, via the formation of 2-isopropylmaleate.</text>
</comment>
<comment type="catalytic activity">
    <reaction evidence="1">
        <text>(2R,3S)-3-isopropylmalate = (2S)-2-isopropylmalate</text>
        <dbReference type="Rhea" id="RHEA:32287"/>
        <dbReference type="ChEBI" id="CHEBI:1178"/>
        <dbReference type="ChEBI" id="CHEBI:35121"/>
        <dbReference type="EC" id="4.2.1.33"/>
    </reaction>
</comment>
<comment type="cofactor">
    <cofactor evidence="1">
        <name>[4Fe-4S] cluster</name>
        <dbReference type="ChEBI" id="CHEBI:49883"/>
    </cofactor>
    <text evidence="1">Binds 1 [4Fe-4S] cluster per subunit.</text>
</comment>
<comment type="pathway">
    <text evidence="1">Amino-acid biosynthesis; L-leucine biosynthesis; L-leucine from 3-methyl-2-oxobutanoate: step 2/4.</text>
</comment>
<comment type="subunit">
    <text evidence="1">Heterodimer of LeuC and LeuD.</text>
</comment>
<comment type="similarity">
    <text evidence="1">Belongs to the aconitase/IPM isomerase family. LeuC type 1 subfamily.</text>
</comment>